<name>RLMN_STREM</name>
<dbReference type="EC" id="2.1.1.192" evidence="1"/>
<dbReference type="EMBL" id="CP001129">
    <property type="protein sequence ID" value="ACG61948.1"/>
    <property type="molecule type" value="Genomic_DNA"/>
</dbReference>
<dbReference type="RefSeq" id="WP_012515224.1">
    <property type="nucleotide sequence ID" value="NC_011134.1"/>
</dbReference>
<dbReference type="SMR" id="B4U1T1"/>
<dbReference type="KEGG" id="sez:Sez_0579"/>
<dbReference type="HOGENOM" id="CLU_029101_0_1_9"/>
<dbReference type="Proteomes" id="UP000001873">
    <property type="component" value="Chromosome"/>
</dbReference>
<dbReference type="GO" id="GO:0005737">
    <property type="term" value="C:cytoplasm"/>
    <property type="evidence" value="ECO:0007669"/>
    <property type="project" value="UniProtKB-SubCell"/>
</dbReference>
<dbReference type="GO" id="GO:0051539">
    <property type="term" value="F:4 iron, 4 sulfur cluster binding"/>
    <property type="evidence" value="ECO:0007669"/>
    <property type="project" value="UniProtKB-UniRule"/>
</dbReference>
<dbReference type="GO" id="GO:0046872">
    <property type="term" value="F:metal ion binding"/>
    <property type="evidence" value="ECO:0007669"/>
    <property type="project" value="UniProtKB-KW"/>
</dbReference>
<dbReference type="GO" id="GO:0070040">
    <property type="term" value="F:rRNA (adenine(2503)-C2-)-methyltransferase activity"/>
    <property type="evidence" value="ECO:0007669"/>
    <property type="project" value="UniProtKB-UniRule"/>
</dbReference>
<dbReference type="GO" id="GO:0019843">
    <property type="term" value="F:rRNA binding"/>
    <property type="evidence" value="ECO:0007669"/>
    <property type="project" value="UniProtKB-UniRule"/>
</dbReference>
<dbReference type="GO" id="GO:0002935">
    <property type="term" value="F:tRNA (adenine(37)-C2)-methyltransferase activity"/>
    <property type="evidence" value="ECO:0007669"/>
    <property type="project" value="UniProtKB-UniRule"/>
</dbReference>
<dbReference type="GO" id="GO:0000049">
    <property type="term" value="F:tRNA binding"/>
    <property type="evidence" value="ECO:0007669"/>
    <property type="project" value="UniProtKB-UniRule"/>
</dbReference>
<dbReference type="GO" id="GO:0070475">
    <property type="term" value="P:rRNA base methylation"/>
    <property type="evidence" value="ECO:0007669"/>
    <property type="project" value="UniProtKB-UniRule"/>
</dbReference>
<dbReference type="GO" id="GO:0030488">
    <property type="term" value="P:tRNA methylation"/>
    <property type="evidence" value="ECO:0007669"/>
    <property type="project" value="UniProtKB-UniRule"/>
</dbReference>
<dbReference type="CDD" id="cd01335">
    <property type="entry name" value="Radical_SAM"/>
    <property type="match status" value="1"/>
</dbReference>
<dbReference type="FunFam" id="3.20.20.70:FF:000014">
    <property type="entry name" value="Probable dual-specificity RNA methyltransferase RlmN"/>
    <property type="match status" value="1"/>
</dbReference>
<dbReference type="Gene3D" id="1.10.150.530">
    <property type="match status" value="1"/>
</dbReference>
<dbReference type="Gene3D" id="3.20.20.70">
    <property type="entry name" value="Aldolase class I"/>
    <property type="match status" value="1"/>
</dbReference>
<dbReference type="HAMAP" id="MF_01849">
    <property type="entry name" value="RNA_methyltr_RlmN"/>
    <property type="match status" value="1"/>
</dbReference>
<dbReference type="InterPro" id="IPR013785">
    <property type="entry name" value="Aldolase_TIM"/>
</dbReference>
<dbReference type="InterPro" id="IPR040072">
    <property type="entry name" value="Methyltransferase_A"/>
</dbReference>
<dbReference type="InterPro" id="IPR048641">
    <property type="entry name" value="RlmN_N"/>
</dbReference>
<dbReference type="InterPro" id="IPR027492">
    <property type="entry name" value="RNA_MTrfase_RlmN"/>
</dbReference>
<dbReference type="InterPro" id="IPR004383">
    <property type="entry name" value="rRNA_lsu_MTrfase_RlmN/Cfr"/>
</dbReference>
<dbReference type="InterPro" id="IPR007197">
    <property type="entry name" value="rSAM"/>
</dbReference>
<dbReference type="NCBIfam" id="TIGR00048">
    <property type="entry name" value="rRNA_mod_RlmN"/>
    <property type="match status" value="1"/>
</dbReference>
<dbReference type="PANTHER" id="PTHR30544">
    <property type="entry name" value="23S RRNA METHYLTRANSFERASE"/>
    <property type="match status" value="1"/>
</dbReference>
<dbReference type="PANTHER" id="PTHR30544:SF5">
    <property type="entry name" value="RADICAL SAM CORE DOMAIN-CONTAINING PROTEIN"/>
    <property type="match status" value="1"/>
</dbReference>
<dbReference type="Pfam" id="PF04055">
    <property type="entry name" value="Radical_SAM"/>
    <property type="match status" value="1"/>
</dbReference>
<dbReference type="Pfam" id="PF21016">
    <property type="entry name" value="RlmN_N"/>
    <property type="match status" value="1"/>
</dbReference>
<dbReference type="PIRSF" id="PIRSF006004">
    <property type="entry name" value="CHP00048"/>
    <property type="match status" value="1"/>
</dbReference>
<dbReference type="SFLD" id="SFLDF00275">
    <property type="entry name" value="adenosine_C2_methyltransferase"/>
    <property type="match status" value="1"/>
</dbReference>
<dbReference type="SFLD" id="SFLDS00029">
    <property type="entry name" value="Radical_SAM"/>
    <property type="match status" value="1"/>
</dbReference>
<dbReference type="SUPFAM" id="SSF102114">
    <property type="entry name" value="Radical SAM enzymes"/>
    <property type="match status" value="1"/>
</dbReference>
<dbReference type="PROSITE" id="PS51918">
    <property type="entry name" value="RADICAL_SAM"/>
    <property type="match status" value="1"/>
</dbReference>
<sequence>MKPSIYGLTRDELIAWAIDNGQKAFRATQIWDWLYRKRIQSFDEMTNISKEFLAILKDSFCINPLKQRVAQESADGTVKYLFELPDGMLIETVLMRQHYGQSVCVTTQVGCNIGCTFCASGLIKKQRDLNSGEITAQIMMVQNYFDQRGQDERVSHVVVMGIGEPFDNYQNVMTFLRTINDDHGLAIGARHITVSTSGLAHKIREFANEGVQVNLAVSLHAPNNELRSSIMRINRSFPLDKLFSAIEYYIETTNRRVTFEYIMLNKVNDGVEQAQELADLTKRIRKLSYVNLIPYNPVSEHDQYSRSPKERVAAFYDILKKNGVNCVVRQEHGTDIDAACGQLRSNTMKKDRQKAAAART</sequence>
<gene>
    <name evidence="1" type="primary">rlmN</name>
    <name type="ordered locus">Sez_0579</name>
</gene>
<protein>
    <recommendedName>
        <fullName evidence="1">Probable dual-specificity RNA methyltransferase RlmN</fullName>
        <ecNumber evidence="1">2.1.1.192</ecNumber>
    </recommendedName>
    <alternativeName>
        <fullName evidence="1">23S rRNA (adenine(2503)-C(2))-methyltransferase</fullName>
    </alternativeName>
    <alternativeName>
        <fullName evidence="1">23S rRNA m2A2503 methyltransferase</fullName>
    </alternativeName>
    <alternativeName>
        <fullName evidence="1">Ribosomal RNA large subunit methyltransferase N</fullName>
    </alternativeName>
    <alternativeName>
        <fullName evidence="1">tRNA (adenine(37)-C(2))-methyltransferase</fullName>
    </alternativeName>
    <alternativeName>
        <fullName evidence="1">tRNA m2A37 methyltransferase</fullName>
    </alternativeName>
</protein>
<organism>
    <name type="scientific">Streptococcus equi subsp. zooepidemicus (strain MGCS10565)</name>
    <dbReference type="NCBI Taxonomy" id="552526"/>
    <lineage>
        <taxon>Bacteria</taxon>
        <taxon>Bacillati</taxon>
        <taxon>Bacillota</taxon>
        <taxon>Bacilli</taxon>
        <taxon>Lactobacillales</taxon>
        <taxon>Streptococcaceae</taxon>
        <taxon>Streptococcus</taxon>
    </lineage>
</organism>
<evidence type="ECO:0000255" key="1">
    <source>
        <dbReference type="HAMAP-Rule" id="MF_01849"/>
    </source>
</evidence>
<evidence type="ECO:0000255" key="2">
    <source>
        <dbReference type="PROSITE-ProRule" id="PRU01266"/>
    </source>
</evidence>
<keyword id="KW-0004">4Fe-4S</keyword>
<keyword id="KW-0963">Cytoplasm</keyword>
<keyword id="KW-1015">Disulfide bond</keyword>
<keyword id="KW-0408">Iron</keyword>
<keyword id="KW-0411">Iron-sulfur</keyword>
<keyword id="KW-0479">Metal-binding</keyword>
<keyword id="KW-0489">Methyltransferase</keyword>
<keyword id="KW-0698">rRNA processing</keyword>
<keyword id="KW-0949">S-adenosyl-L-methionine</keyword>
<keyword id="KW-0808">Transferase</keyword>
<keyword id="KW-0819">tRNA processing</keyword>
<comment type="function">
    <text evidence="1">Specifically methylates position 2 of adenine 2503 in 23S rRNA and position 2 of adenine 37 in tRNAs.</text>
</comment>
<comment type="catalytic activity">
    <reaction evidence="1">
        <text>adenosine(2503) in 23S rRNA + 2 reduced [2Fe-2S]-[ferredoxin] + 2 S-adenosyl-L-methionine = 2-methyladenosine(2503) in 23S rRNA + 5'-deoxyadenosine + L-methionine + 2 oxidized [2Fe-2S]-[ferredoxin] + S-adenosyl-L-homocysteine</text>
        <dbReference type="Rhea" id="RHEA:42916"/>
        <dbReference type="Rhea" id="RHEA-COMP:10000"/>
        <dbReference type="Rhea" id="RHEA-COMP:10001"/>
        <dbReference type="Rhea" id="RHEA-COMP:10152"/>
        <dbReference type="Rhea" id="RHEA-COMP:10282"/>
        <dbReference type="ChEBI" id="CHEBI:17319"/>
        <dbReference type="ChEBI" id="CHEBI:33737"/>
        <dbReference type="ChEBI" id="CHEBI:33738"/>
        <dbReference type="ChEBI" id="CHEBI:57844"/>
        <dbReference type="ChEBI" id="CHEBI:57856"/>
        <dbReference type="ChEBI" id="CHEBI:59789"/>
        <dbReference type="ChEBI" id="CHEBI:74411"/>
        <dbReference type="ChEBI" id="CHEBI:74497"/>
        <dbReference type="EC" id="2.1.1.192"/>
    </reaction>
</comment>
<comment type="catalytic activity">
    <reaction evidence="1">
        <text>adenosine(37) in tRNA + 2 reduced [2Fe-2S]-[ferredoxin] + 2 S-adenosyl-L-methionine = 2-methyladenosine(37) in tRNA + 5'-deoxyadenosine + L-methionine + 2 oxidized [2Fe-2S]-[ferredoxin] + S-adenosyl-L-homocysteine</text>
        <dbReference type="Rhea" id="RHEA:43332"/>
        <dbReference type="Rhea" id="RHEA-COMP:10000"/>
        <dbReference type="Rhea" id="RHEA-COMP:10001"/>
        <dbReference type="Rhea" id="RHEA-COMP:10162"/>
        <dbReference type="Rhea" id="RHEA-COMP:10485"/>
        <dbReference type="ChEBI" id="CHEBI:17319"/>
        <dbReference type="ChEBI" id="CHEBI:33737"/>
        <dbReference type="ChEBI" id="CHEBI:33738"/>
        <dbReference type="ChEBI" id="CHEBI:57844"/>
        <dbReference type="ChEBI" id="CHEBI:57856"/>
        <dbReference type="ChEBI" id="CHEBI:59789"/>
        <dbReference type="ChEBI" id="CHEBI:74411"/>
        <dbReference type="ChEBI" id="CHEBI:74497"/>
        <dbReference type="EC" id="2.1.1.192"/>
    </reaction>
</comment>
<comment type="cofactor">
    <cofactor evidence="1">
        <name>[4Fe-4S] cluster</name>
        <dbReference type="ChEBI" id="CHEBI:49883"/>
    </cofactor>
    <text evidence="1">Binds 1 [4Fe-4S] cluster. The cluster is coordinated with 3 cysteines and an exchangeable S-adenosyl-L-methionine.</text>
</comment>
<comment type="subcellular location">
    <subcellularLocation>
        <location evidence="1">Cytoplasm</location>
    </subcellularLocation>
</comment>
<comment type="miscellaneous">
    <text evidence="1">Reaction proceeds by a ping-pong mechanism involving intermediate methylation of a conserved cysteine residue.</text>
</comment>
<comment type="similarity">
    <text evidence="1">Belongs to the radical SAM superfamily. RlmN family.</text>
</comment>
<accession>B4U1T1</accession>
<feature type="chain" id="PRO_1000188609" description="Probable dual-specificity RNA methyltransferase RlmN">
    <location>
        <begin position="1"/>
        <end position="360"/>
    </location>
</feature>
<feature type="domain" description="Radical SAM core" evidence="2">
    <location>
        <begin position="97"/>
        <end position="335"/>
    </location>
</feature>
<feature type="active site" description="Proton acceptor" evidence="1">
    <location>
        <position position="91"/>
    </location>
</feature>
<feature type="active site" description="S-methylcysteine intermediate" evidence="1">
    <location>
        <position position="340"/>
    </location>
</feature>
<feature type="binding site" evidence="1">
    <location>
        <position position="111"/>
    </location>
    <ligand>
        <name>[4Fe-4S] cluster</name>
        <dbReference type="ChEBI" id="CHEBI:49883"/>
        <note>4Fe-4S-S-AdoMet</note>
    </ligand>
</feature>
<feature type="binding site" evidence="1">
    <location>
        <position position="115"/>
    </location>
    <ligand>
        <name>[4Fe-4S] cluster</name>
        <dbReference type="ChEBI" id="CHEBI:49883"/>
        <note>4Fe-4S-S-AdoMet</note>
    </ligand>
</feature>
<feature type="binding site" evidence="1">
    <location>
        <position position="118"/>
    </location>
    <ligand>
        <name>[4Fe-4S] cluster</name>
        <dbReference type="ChEBI" id="CHEBI:49883"/>
        <note>4Fe-4S-S-AdoMet</note>
    </ligand>
</feature>
<feature type="binding site" evidence="1">
    <location>
        <begin position="163"/>
        <end position="164"/>
    </location>
    <ligand>
        <name>S-adenosyl-L-methionine</name>
        <dbReference type="ChEBI" id="CHEBI:59789"/>
    </ligand>
</feature>
<feature type="binding site" evidence="1">
    <location>
        <position position="195"/>
    </location>
    <ligand>
        <name>S-adenosyl-L-methionine</name>
        <dbReference type="ChEBI" id="CHEBI:59789"/>
    </ligand>
</feature>
<feature type="binding site" evidence="1">
    <location>
        <begin position="218"/>
        <end position="220"/>
    </location>
    <ligand>
        <name>S-adenosyl-L-methionine</name>
        <dbReference type="ChEBI" id="CHEBI:59789"/>
    </ligand>
</feature>
<feature type="binding site" evidence="1">
    <location>
        <position position="296"/>
    </location>
    <ligand>
        <name>S-adenosyl-L-methionine</name>
        <dbReference type="ChEBI" id="CHEBI:59789"/>
    </ligand>
</feature>
<feature type="disulfide bond" description="(transient)" evidence="1">
    <location>
        <begin position="104"/>
        <end position="340"/>
    </location>
</feature>
<proteinExistence type="inferred from homology"/>
<reference key="1">
    <citation type="journal article" date="2008" name="PLoS ONE">
        <title>Genome sequence of a lancefield group C Streptococcus zooepidemicus strain causing epidemic nephritis: new information about an old disease.</title>
        <authorList>
            <person name="Beres S.B."/>
            <person name="Sesso R."/>
            <person name="Pinto S.W.L."/>
            <person name="Hoe N.P."/>
            <person name="Porcella S.F."/>
            <person name="Deleo F.R."/>
            <person name="Musser J.M."/>
        </authorList>
    </citation>
    <scope>NUCLEOTIDE SEQUENCE [LARGE SCALE GENOMIC DNA]</scope>
    <source>
        <strain>MGCS10565</strain>
    </source>
</reference>